<sequence>MKVKMLSRNPDNYVRETKLDLQRVPRNYDPALHPFEVPREYIRALNATKLERVFAKPFLASLDGHRDGVNCLAKHPEKLATVLSGACDGEVRIWNLTQRNCIRTIQAHEGFVRGICTRFCGTSFFTVGDDKTVKQWKMDGPGYGDEEEPLHTILGKTVYTGIDHHWKEAVFATCGQQVDIWDEQRTNPICSMTWGFDSISSVKFNPIETFLLGSCASDRNIVLYDMRQATPLKKVILDMRTNTICWNPMEAFIFTAANEDYNLYTFDMRALDTPVMVHMDHVSAVLDVDYSPTGKEFVSASFDKSIRIFPVDKSRSREVYHTKRMQHVICVKWTSDSKYIMCGSDEMNIRLWKANASEKLGVLTSREKAAKDYNQKLKEKFQHYPHIKRIARHRHLPKSIYSQIQEQRIMKEARRRKEVNRIKHSKPGSVPLVSEKKKHVVAVVK</sequence>
<proteinExistence type="evidence at protein level"/>
<comment type="function">
    <text evidence="8 10">Part of the small subunit (SSU) processome, first precursor of the small eukaryotic ribosomal subunit. During the assembly of the SSU processome in the nucleolus, many ribosome biogenesis factors, an RNA chaperone and ribosomal proteins associate with the nascent pre-rRNA and work in concert to generate RNA folding, modifications, rearrangements and cleavage as well as targeted degradation of pre-ribosomal RNA by the RNA exosome (PubMed:34516797). Participates in the 18S rRNA processing in growing oocytes, being essential for oocyte nonsurrounded nucleolus (NSN) to surrounded nucleolus (SN) transition (PubMed:30283081).</text>
</comment>
<comment type="function">
    <text evidence="1 4 7 9 11">Substrate-recognition component of a DCX (DDB1-CUL4-X-box) E3 ubiquitin-protein ligase complex that plays a key role in embryo preimplantation and is required for normal meiotic cycle progression in oocytes (PubMed:16949367, PubMed:30111536, PubMed:31492966). Acts as a maternal factor that regulates oocyte and zygotic chromatin tightness during maternal to zygotic transition (By similarity). Also involved in the transformation of the endometrium into the decidua, known as decidualization, providing a solid foundation for implantation of blastocysts (PubMed:35932979). Recognizes the histone methyltransferases SUV39H1 and SUV39H2 and directs them to polyubiquitination and proteasomal degradation, which facilitates the H3K9me3 removal and early zygotic gene expression, essential steps for progressive genome reprogramming and the establishment of pluripotency during preimplantation embryonic development (PubMed:30111536). Supports the spindle assembly and chromosome condensation during oocyte meiotic division by targeting the polyubiquitination and degradation of PTEN, a lipid phosphatase that inhibits PI3K pathway as well as oocyte growth and maturation (PubMed:31492966). Targets PMP22 for polyubiquitination and proteasomal degradation (By similarity).</text>
</comment>
<comment type="pathway">
    <text>Protein modification; protein ubiquitination.</text>
</comment>
<comment type="subunit">
    <text evidence="4 6 7 8 9 10">Part of the small subunit (SSU) processome, composed of more than 70 proteins and the RNA chaperone small nucleolar RNA (snoRNA) U3 (PubMed:34516797). Component of the DCX(DCAF13) E3 ubiquitin ligase complex, at least composed of CUL4 (CUL4A or CUL4B), DDB1, DCAF13 and RBX1. Interacts (via WD40 domain) with DDB1 (PubMed:16949367, PubMed:30111536, PubMed:30283081, PubMed:31492966). Interacts with ESR1 and LATS1 (PubMed:28068668).</text>
</comment>
<comment type="interaction">
    <interactant intactId="EBI-7402939">
        <id>Q9NV06</id>
    </interactant>
    <interactant intactId="EBI-78473">
        <id>P03372</id>
        <label>ESR1</label>
    </interactant>
    <organismsDiffer>false</organismsDiffer>
    <experiments>2</experiments>
</comment>
<comment type="subcellular location">
    <subcellularLocation>
        <location evidence="5 8 10">Nucleus</location>
        <location evidence="5 8 10">Nucleolus</location>
    </subcellularLocation>
    <text evidence="5">In the nucleolus, localizes predominantly in the granular component, but also detected in the fibrillar center and dense fibrillar component.</text>
</comment>
<comment type="alternative products">
    <event type="alternative splicing"/>
    <isoform>
        <id>Q9NV06-1</id>
        <name>1</name>
        <sequence type="displayed"/>
    </isoform>
    <isoform>
        <id>Q9NV06-2</id>
        <name>2</name>
        <sequence type="described" ref="VSP_029283 VSP_029284"/>
    </isoform>
</comment>
<comment type="tissue specificity">
    <text evidence="11">Expressed in the endometrium during decidualization. Expression is down-regulated in preeclampsia decidual tissues.</text>
</comment>
<comment type="developmental stage">
    <text evidence="7">Transiently expressed during four-cell to morula stages in embryo.</text>
</comment>
<comment type="similarity">
    <text evidence="13">Belongs to the WD repeat DCAF13/WDSOF1 family.</text>
</comment>
<comment type="sequence caution" evidence="13">
    <conflict type="erroneous initiation">
        <sequence resource="EMBL-CDS" id="AAH26067"/>
    </conflict>
    <text>Extended N-terminus.</text>
</comment>
<comment type="sequence caution" evidence="13">
    <conflict type="erroneous initiation">
        <sequence resource="EMBL-CDS" id="AAI01811"/>
    </conflict>
    <text>Extended N-terminus.</text>
</comment>
<comment type="sequence caution" evidence="13">
    <conflict type="erroneous initiation">
        <sequence resource="EMBL-CDS" id="AAI12043"/>
    </conflict>
    <text>Extended N-terminus.</text>
</comment>
<comment type="sequence caution" evidence="13">
    <conflict type="erroneous initiation">
        <sequence resource="EMBL-CDS" id="BAB55377"/>
    </conflict>
    <text>Extended N-terminus.</text>
</comment>
<comment type="sequence caution" evidence="13">
    <conflict type="erroneous initiation">
        <sequence resource="EMBL-CDS" id="BAC11163"/>
    </conflict>
    <text>Extended N-terminus.</text>
</comment>
<reference key="1">
    <citation type="journal article" date="2000" name="Genome Res.">
        <title>Cloning and functional analysis of cDNAs with open reading frames for 300 previously undefined genes expressed in CD34+ hematopoietic stem/progenitor cells.</title>
        <authorList>
            <person name="Zhang Q.-H."/>
            <person name="Ye M."/>
            <person name="Wu X.-Y."/>
            <person name="Ren S.-X."/>
            <person name="Zhao M."/>
            <person name="Zhao C.-J."/>
            <person name="Fu G."/>
            <person name="Shen Y."/>
            <person name="Fan H.-Y."/>
            <person name="Lu G."/>
            <person name="Zhong M."/>
            <person name="Xu X.-R."/>
            <person name="Han Z.-G."/>
            <person name="Zhang J.-W."/>
            <person name="Tao J."/>
            <person name="Huang Q.-H."/>
            <person name="Zhou J."/>
            <person name="Hu G.-X."/>
            <person name="Gu J."/>
            <person name="Chen S.-J."/>
            <person name="Chen Z."/>
        </authorList>
    </citation>
    <scope>NUCLEOTIDE SEQUENCE [LARGE SCALE MRNA] (ISOFORM 2)</scope>
    <source>
        <tissue>Umbilical cord blood</tissue>
    </source>
</reference>
<reference key="2">
    <citation type="journal article" date="2004" name="Nat. Genet.">
        <title>Complete sequencing and characterization of 21,243 full-length human cDNAs.</title>
        <authorList>
            <person name="Ota T."/>
            <person name="Suzuki Y."/>
            <person name="Nishikawa T."/>
            <person name="Otsuki T."/>
            <person name="Sugiyama T."/>
            <person name="Irie R."/>
            <person name="Wakamatsu A."/>
            <person name="Hayashi K."/>
            <person name="Sato H."/>
            <person name="Nagai K."/>
            <person name="Kimura K."/>
            <person name="Makita H."/>
            <person name="Sekine M."/>
            <person name="Obayashi M."/>
            <person name="Nishi T."/>
            <person name="Shibahara T."/>
            <person name="Tanaka T."/>
            <person name="Ishii S."/>
            <person name="Yamamoto J."/>
            <person name="Saito K."/>
            <person name="Kawai Y."/>
            <person name="Isono Y."/>
            <person name="Nakamura Y."/>
            <person name="Nagahari K."/>
            <person name="Murakami K."/>
            <person name="Yasuda T."/>
            <person name="Iwayanagi T."/>
            <person name="Wagatsuma M."/>
            <person name="Shiratori A."/>
            <person name="Sudo H."/>
            <person name="Hosoiri T."/>
            <person name="Kaku Y."/>
            <person name="Kodaira H."/>
            <person name="Kondo H."/>
            <person name="Sugawara M."/>
            <person name="Takahashi M."/>
            <person name="Kanda K."/>
            <person name="Yokoi T."/>
            <person name="Furuya T."/>
            <person name="Kikkawa E."/>
            <person name="Omura Y."/>
            <person name="Abe K."/>
            <person name="Kamihara K."/>
            <person name="Katsuta N."/>
            <person name="Sato K."/>
            <person name="Tanikawa M."/>
            <person name="Yamazaki M."/>
            <person name="Ninomiya K."/>
            <person name="Ishibashi T."/>
            <person name="Yamashita H."/>
            <person name="Murakawa K."/>
            <person name="Fujimori K."/>
            <person name="Tanai H."/>
            <person name="Kimata M."/>
            <person name="Watanabe M."/>
            <person name="Hiraoka S."/>
            <person name="Chiba Y."/>
            <person name="Ishida S."/>
            <person name="Ono Y."/>
            <person name="Takiguchi S."/>
            <person name="Watanabe S."/>
            <person name="Yosida M."/>
            <person name="Hotuta T."/>
            <person name="Kusano J."/>
            <person name="Kanehori K."/>
            <person name="Takahashi-Fujii A."/>
            <person name="Hara H."/>
            <person name="Tanase T.-O."/>
            <person name="Nomura Y."/>
            <person name="Togiya S."/>
            <person name="Komai F."/>
            <person name="Hara R."/>
            <person name="Takeuchi K."/>
            <person name="Arita M."/>
            <person name="Imose N."/>
            <person name="Musashino K."/>
            <person name="Yuuki H."/>
            <person name="Oshima A."/>
            <person name="Sasaki N."/>
            <person name="Aotsuka S."/>
            <person name="Yoshikawa Y."/>
            <person name="Matsunawa H."/>
            <person name="Ichihara T."/>
            <person name="Shiohata N."/>
            <person name="Sano S."/>
            <person name="Moriya S."/>
            <person name="Momiyama H."/>
            <person name="Satoh N."/>
            <person name="Takami S."/>
            <person name="Terashima Y."/>
            <person name="Suzuki O."/>
            <person name="Nakagawa S."/>
            <person name="Senoh A."/>
            <person name="Mizoguchi H."/>
            <person name="Goto Y."/>
            <person name="Shimizu F."/>
            <person name="Wakebe H."/>
            <person name="Hishigaki H."/>
            <person name="Watanabe T."/>
            <person name="Sugiyama A."/>
            <person name="Takemoto M."/>
            <person name="Kawakami B."/>
            <person name="Yamazaki M."/>
            <person name="Watanabe K."/>
            <person name="Kumagai A."/>
            <person name="Itakura S."/>
            <person name="Fukuzumi Y."/>
            <person name="Fujimori Y."/>
            <person name="Komiyama M."/>
            <person name="Tashiro H."/>
            <person name="Tanigami A."/>
            <person name="Fujiwara T."/>
            <person name="Ono T."/>
            <person name="Yamada K."/>
            <person name="Fujii Y."/>
            <person name="Ozaki K."/>
            <person name="Hirao M."/>
            <person name="Ohmori Y."/>
            <person name="Kawabata A."/>
            <person name="Hikiji T."/>
            <person name="Kobatake N."/>
            <person name="Inagaki H."/>
            <person name="Ikema Y."/>
            <person name="Okamoto S."/>
            <person name="Okitani R."/>
            <person name="Kawakami T."/>
            <person name="Noguchi S."/>
            <person name="Itoh T."/>
            <person name="Shigeta K."/>
            <person name="Senba T."/>
            <person name="Matsumura K."/>
            <person name="Nakajima Y."/>
            <person name="Mizuno T."/>
            <person name="Morinaga M."/>
            <person name="Sasaki M."/>
            <person name="Togashi T."/>
            <person name="Oyama M."/>
            <person name="Hata H."/>
            <person name="Watanabe M."/>
            <person name="Komatsu T."/>
            <person name="Mizushima-Sugano J."/>
            <person name="Satoh T."/>
            <person name="Shirai Y."/>
            <person name="Takahashi Y."/>
            <person name="Nakagawa K."/>
            <person name="Okumura K."/>
            <person name="Nagase T."/>
            <person name="Nomura N."/>
            <person name="Kikuchi H."/>
            <person name="Masuho Y."/>
            <person name="Yamashita R."/>
            <person name="Nakai K."/>
            <person name="Yada T."/>
            <person name="Nakamura Y."/>
            <person name="Ohara O."/>
            <person name="Isogai T."/>
            <person name="Sugano S."/>
        </authorList>
    </citation>
    <scope>NUCLEOTIDE SEQUENCE [LARGE SCALE MRNA] (ISOFORM 1)</scope>
    <scope>VARIANT VAL-42</scope>
    <source>
        <tissue>Placenta</tissue>
        <tissue>Teratocarcinoma</tissue>
    </source>
</reference>
<reference key="3">
    <citation type="journal article" date="2004" name="Genome Res.">
        <title>The status, quality, and expansion of the NIH full-length cDNA project: the Mammalian Gene Collection (MGC).</title>
        <authorList>
            <consortium name="The MGC Project Team"/>
        </authorList>
    </citation>
    <scope>NUCLEOTIDE SEQUENCE [LARGE SCALE MRNA] (ISOFORM 1)</scope>
    <scope>VARIANT VAL-42</scope>
    <source>
        <tissue>Brain</tissue>
        <tissue>Testis</tissue>
    </source>
</reference>
<reference key="4">
    <citation type="journal article" date="2006" name="Mol. Cell">
        <title>A family of diverse Cul4-Ddb1-interacting proteins includes Cdt2, which is required for S phase destruction of the replication factor Cdt1.</title>
        <authorList>
            <person name="Jin J."/>
            <person name="Arias E.E."/>
            <person name="Chen J."/>
            <person name="Harper J.W."/>
            <person name="Walter J.C."/>
        </authorList>
    </citation>
    <scope>FUNCTION</scope>
    <scope>INTERACTION WITH DDB1</scope>
    <scope>IDENTIFICATION BY MASS SPECTROMETRY</scope>
</reference>
<reference key="5">
    <citation type="journal article" date="2009" name="Science">
        <title>Lysine acetylation targets protein complexes and co-regulates major cellular functions.</title>
        <authorList>
            <person name="Choudhary C."/>
            <person name="Kumar C."/>
            <person name="Gnad F."/>
            <person name="Nielsen M.L."/>
            <person name="Rehman M."/>
            <person name="Walther T.C."/>
            <person name="Olsen J.V."/>
            <person name="Mann M."/>
        </authorList>
    </citation>
    <scope>ACETYLATION [LARGE SCALE ANALYSIS] AT LYS-49</scope>
    <scope>IDENTIFICATION BY MASS SPECTROMETRY [LARGE SCALE ANALYSIS]</scope>
</reference>
<reference key="6">
    <citation type="journal article" date="2012" name="Proc. Natl. Acad. Sci. U.S.A.">
        <title>N-terminal acetylome analyses and functional insights of the N-terminal acetyltransferase NatB.</title>
        <authorList>
            <person name="Van Damme P."/>
            <person name="Lasa M."/>
            <person name="Polevoda B."/>
            <person name="Gazquez C."/>
            <person name="Elosegui-Artola A."/>
            <person name="Kim D.S."/>
            <person name="De Juan-Pardo E."/>
            <person name="Demeyer K."/>
            <person name="Hole K."/>
            <person name="Larrea E."/>
            <person name="Timmerman E."/>
            <person name="Prieto J."/>
            <person name="Arnesen T."/>
            <person name="Sherman F."/>
            <person name="Gevaert K."/>
            <person name="Aldabe R."/>
        </authorList>
    </citation>
    <scope>IDENTIFICATION BY MASS SPECTROMETRY [LARGE SCALE ANALYSIS]</scope>
</reference>
<reference key="7">
    <citation type="journal article" date="2014" name="Biochem. Cell Biol.">
        <title>Dynamics of WD-repeat containing proteins in SSU processome components.</title>
        <authorList>
            <person name="Wada K."/>
            <person name="Sato M."/>
            <person name="Araki N."/>
            <person name="Kumeta M."/>
            <person name="Hirai Y."/>
            <person name="Takeyasu K."/>
            <person name="Furukawa K."/>
            <person name="Horigome T."/>
        </authorList>
    </citation>
    <scope>SUBCELLULAR LOCATION</scope>
</reference>
<reference key="8">
    <citation type="journal article" date="2017" name="Nature">
        <title>The Hippo kinases LATS1 and 2 control human breast cell fate via crosstalk with ERalpha.</title>
        <authorList>
            <person name="Britschgi A."/>
            <person name="Duss S."/>
            <person name="Kim S."/>
            <person name="Couto J.P."/>
            <person name="Brinkhaus H."/>
            <person name="Koren S."/>
            <person name="De Silva D."/>
            <person name="Mertz K.D."/>
            <person name="Kaup D."/>
            <person name="Varga Z."/>
            <person name="Voshol H."/>
            <person name="Vissieres A."/>
            <person name="Leroy C."/>
            <person name="Roloff T."/>
            <person name="Stadler M.B."/>
            <person name="Scheel C.H."/>
            <person name="Miraglia L.J."/>
            <person name="Orth A.P."/>
            <person name="Bonamy G.M."/>
            <person name="Reddy V.A."/>
            <person name="Bentires-Alj M."/>
        </authorList>
    </citation>
    <scope>INTERACTION WITH ESR1 AND LATS1</scope>
</reference>
<reference key="9">
    <citation type="journal article" date="2018" name="EMBO J.">
        <title>DCAF13 promotes pluripotency by negatively regulating SUV39H1 stability during early embryonic development.</title>
        <authorList>
            <person name="Zhang Y.L."/>
            <person name="Zhao L.W."/>
            <person name="Zhang J."/>
            <person name="Le R."/>
            <person name="Ji S.Y."/>
            <person name="Chen C."/>
            <person name="Gao Y."/>
            <person name="Li D."/>
            <person name="Gao S."/>
            <person name="Fan H.Y."/>
        </authorList>
    </citation>
    <scope>FUNCTION</scope>
    <scope>IDENTIFICATION IN THE DCX(DCAF13) COMPLEX</scope>
    <scope>DEVELOPMENTAL STAGE</scope>
</reference>
<reference key="10">
    <citation type="journal article" date="2019" name="Cell Death Differ.">
        <title>Mammalian nucleolar protein DCAF13 is essential for ovarian follicle maintenance and oocyte growth by mediating rRNA processing.</title>
        <authorList>
            <person name="Zhang J."/>
            <person name="Zhang Y.L."/>
            <person name="Zhao L.W."/>
            <person name="Guo J.X."/>
            <person name="Yu J.L."/>
            <person name="Ji S.Y."/>
            <person name="Cao L.R."/>
            <person name="Zhang S.Y."/>
            <person name="Shen L."/>
            <person name="Ou X.H."/>
            <person name="Fan H.Y."/>
        </authorList>
    </citation>
    <scope>SUBCELLULAR LOCATION</scope>
    <scope>FUNCTION</scope>
</reference>
<reference key="11">
    <citation type="journal article" date="2020" name="Cell. Mol. Life Sci.">
        <title>The CRL4-DCAF13 ubiquitin E3 ligase supports oocyte meiotic resumption by targeting PTEN degradation.</title>
        <authorList>
            <person name="Zhang J."/>
            <person name="Zhang Y.L."/>
            <person name="Zhao L.W."/>
            <person name="Pi S.B."/>
            <person name="Zhang S.Y."/>
            <person name="Tong C."/>
            <person name="Fan H.Y."/>
        </authorList>
    </citation>
    <scope>FUNCTION</scope>
    <scope>IDENTIFICATION IN THE DCX(DCAF13) COMPLEX</scope>
</reference>
<reference evidence="15 16 17" key="12">
    <citation type="journal article" date="2021" name="Science">
        <title>Nucleolar maturation of the human small subunit processome.</title>
        <authorList>
            <person name="Singh S."/>
            <person name="Vanden Broeck A."/>
            <person name="Miller L."/>
            <person name="Chaker-Margot M."/>
            <person name="Klinge S."/>
        </authorList>
    </citation>
    <scope>STRUCTURE BY ELECTRON MICROSCOPY (2.70 ANGSTROMS)</scope>
    <scope>FUNCTION</scope>
    <scope>SUBUNIT</scope>
    <scope>SUBCELLULAR LOCATION</scope>
</reference>
<reference key="13">
    <citation type="journal article" date="2022" name="Mol. Cell. Endocrinol.">
        <title>DCAF13 is essential for the pathogenesis of preeclampsia through its involvement in endometrial decidualization.</title>
        <authorList>
            <person name="Yan X."/>
            <person name="Rong M."/>
            <person name="Zhou Q."/>
            <person name="Zhang C."/>
        </authorList>
    </citation>
    <scope>FUNCTION</scope>
    <scope>TISSUE SPECIFICITY</scope>
</reference>
<keyword id="KW-0002">3D-structure</keyword>
<keyword id="KW-0007">Acetylation</keyword>
<keyword id="KW-0025">Alternative splicing</keyword>
<keyword id="KW-0539">Nucleus</keyword>
<keyword id="KW-1267">Proteomics identification</keyword>
<keyword id="KW-1185">Reference proteome</keyword>
<keyword id="KW-0677">Repeat</keyword>
<keyword id="KW-0687">Ribonucleoprotein</keyword>
<keyword id="KW-0690">Ribosome biogenesis</keyword>
<keyword id="KW-0698">rRNA processing</keyword>
<keyword id="KW-0833">Ubl conjugation pathway</keyword>
<keyword id="KW-0853">WD repeat</keyword>
<gene>
    <name evidence="14" type="primary">DCAF13</name>
    <name type="synonym">WDSOF1</name>
    <name type="ORF">HSPC064</name>
</gene>
<feature type="chain" id="PRO_0000310428" description="DDB1- and CUL4-associated factor 13">
    <location>
        <begin position="1"/>
        <end position="445"/>
    </location>
</feature>
<feature type="repeat" description="WD 1">
    <location>
        <begin position="64"/>
        <end position="104"/>
    </location>
</feature>
<feature type="repeat" description="WD 2">
    <location>
        <begin position="107"/>
        <end position="146"/>
    </location>
</feature>
<feature type="repeat" description="WD 3">
    <location>
        <begin position="149"/>
        <end position="191"/>
    </location>
</feature>
<feature type="repeat" description="WD 4">
    <location>
        <begin position="194"/>
        <end position="234"/>
    </location>
</feature>
<feature type="repeat" description="WD 5">
    <location>
        <begin position="236"/>
        <end position="276"/>
    </location>
</feature>
<feature type="repeat" description="WD 6">
    <location>
        <begin position="280"/>
        <end position="319"/>
    </location>
</feature>
<feature type="repeat" description="WD 7">
    <location>
        <begin position="323"/>
        <end position="362"/>
    </location>
</feature>
<feature type="region of interest" description="Required for nucleolar location" evidence="1">
    <location>
        <begin position="353"/>
        <end position="441"/>
    </location>
</feature>
<feature type="modified residue" description="N6-acetyllysine" evidence="18">
    <location>
        <position position="49"/>
    </location>
</feature>
<feature type="splice variant" id="VSP_029283" description="In isoform 2." evidence="12">
    <original>VRIWNL</original>
    <variation>LVMTKL</variation>
    <location>
        <begin position="91"/>
        <end position="96"/>
    </location>
</feature>
<feature type="splice variant" id="VSP_029284" description="In isoform 2." evidence="12">
    <location>
        <begin position="97"/>
        <end position="445"/>
    </location>
</feature>
<feature type="sequence variant" id="VAR_037035" description="In dbSNP:rs3134253." evidence="2 3">
    <original>I</original>
    <variation>V</variation>
    <location>
        <position position="42"/>
    </location>
</feature>
<feature type="sequence variant" id="VAR_037036" description="In dbSNP:rs13272825.">
    <original>N</original>
    <variation>S</variation>
    <location>
        <position position="70"/>
    </location>
</feature>
<feature type="sequence conflict" description="In Ref. 2; BAC11163." evidence="13" ref="2">
    <original>P</original>
    <variation>S</variation>
    <location>
        <position position="38"/>
    </location>
</feature>
<feature type="sequence conflict" description="In Ref. 3; AAH26067." evidence="13" ref="3">
    <original>A</original>
    <variation>S</variation>
    <location>
        <position position="86"/>
    </location>
</feature>
<feature type="sequence conflict" description="In Ref. 2; BAC11163." evidence="13" ref="2">
    <original>K</original>
    <variation>E</variation>
    <location>
        <position position="304"/>
    </location>
</feature>
<dbReference type="EMBL" id="AF161549">
    <property type="protein sequence ID" value="AAF29036.1"/>
    <property type="molecule type" value="mRNA"/>
</dbReference>
<dbReference type="EMBL" id="AK001874">
    <property type="protein sequence ID" value="BAA91955.1"/>
    <property type="molecule type" value="mRNA"/>
</dbReference>
<dbReference type="EMBL" id="AK027799">
    <property type="protein sequence ID" value="BAB55377.1"/>
    <property type="status" value="ALT_INIT"/>
    <property type="molecule type" value="mRNA"/>
</dbReference>
<dbReference type="EMBL" id="AK074725">
    <property type="protein sequence ID" value="BAC11163.1"/>
    <property type="status" value="ALT_INIT"/>
    <property type="molecule type" value="mRNA"/>
</dbReference>
<dbReference type="EMBL" id="BC026067">
    <property type="protein sequence ID" value="AAH26067.2"/>
    <property type="status" value="ALT_INIT"/>
    <property type="molecule type" value="mRNA"/>
</dbReference>
<dbReference type="EMBL" id="BC101810">
    <property type="protein sequence ID" value="AAI01811.1"/>
    <property type="status" value="ALT_INIT"/>
    <property type="molecule type" value="mRNA"/>
</dbReference>
<dbReference type="EMBL" id="BC112042">
    <property type="protein sequence ID" value="AAI12043.1"/>
    <property type="status" value="ALT_INIT"/>
    <property type="molecule type" value="mRNA"/>
</dbReference>
<dbReference type="CCDS" id="CCDS34934.2">
    <molecule id="Q9NV06-1"/>
</dbReference>
<dbReference type="RefSeq" id="NP_056235.4">
    <molecule id="Q9NV06-1"/>
    <property type="nucleotide sequence ID" value="NM_015420.6"/>
</dbReference>
<dbReference type="PDB" id="7MQ8">
    <property type="method" value="EM"/>
    <property type="resolution" value="3.60 A"/>
    <property type="chains" value="LU=1-445"/>
</dbReference>
<dbReference type="PDB" id="7MQ9">
    <property type="method" value="EM"/>
    <property type="resolution" value="3.87 A"/>
    <property type="chains" value="LU=1-445"/>
</dbReference>
<dbReference type="PDB" id="7MQA">
    <property type="method" value="EM"/>
    <property type="resolution" value="2.70 A"/>
    <property type="chains" value="LU=1-445"/>
</dbReference>
<dbReference type="PDBsum" id="7MQ8"/>
<dbReference type="PDBsum" id="7MQ9"/>
<dbReference type="PDBsum" id="7MQA"/>
<dbReference type="EMDB" id="EMD-23936"/>
<dbReference type="EMDB" id="EMD-23937"/>
<dbReference type="EMDB" id="EMD-23938"/>
<dbReference type="SMR" id="Q9NV06"/>
<dbReference type="BioGRID" id="117393">
    <property type="interactions" value="241"/>
</dbReference>
<dbReference type="ComplexPortal" id="CPX-2399">
    <property type="entry name" value="CRL4-DCAF13 E3 ubiquitin ligase complex, CUL4A variant"/>
</dbReference>
<dbReference type="ComplexPortal" id="CPX-2407">
    <property type="entry name" value="CRL4-DCAF13 E3 ubiquitin ligase complex, CUL4B variant"/>
</dbReference>
<dbReference type="ComplexPortal" id="CPX-2511">
    <property type="entry name" value="Small ribosomal subunit processome"/>
</dbReference>
<dbReference type="FunCoup" id="Q9NV06">
    <property type="interactions" value="3239"/>
</dbReference>
<dbReference type="IntAct" id="Q9NV06">
    <property type="interactions" value="61"/>
</dbReference>
<dbReference type="MINT" id="Q9NV06"/>
<dbReference type="STRING" id="9606.ENSP00000297579"/>
<dbReference type="GlyGen" id="Q9NV06">
    <property type="glycosylation" value="3 sites, 1 N-linked glycan (1 site), 1 O-linked glycan (2 sites)"/>
</dbReference>
<dbReference type="iPTMnet" id="Q9NV06"/>
<dbReference type="PhosphoSitePlus" id="Q9NV06"/>
<dbReference type="SwissPalm" id="Q9NV06"/>
<dbReference type="BioMuta" id="DCAF13"/>
<dbReference type="DMDM" id="160358731"/>
<dbReference type="jPOST" id="Q9NV06"/>
<dbReference type="MassIVE" id="Q9NV06"/>
<dbReference type="PaxDb" id="9606-ENSP00000297579"/>
<dbReference type="PeptideAtlas" id="Q9NV06"/>
<dbReference type="ProteomicsDB" id="82733">
    <molecule id="Q9NV06-1"/>
</dbReference>
<dbReference type="ProteomicsDB" id="82734">
    <molecule id="Q9NV06-2"/>
</dbReference>
<dbReference type="Pumba" id="Q9NV06"/>
<dbReference type="Antibodypedia" id="26392">
    <property type="antibodies" value="102 antibodies from 15 providers"/>
</dbReference>
<dbReference type="DNASU" id="25879"/>
<dbReference type="Ensembl" id="ENST00000612750.5">
    <molecule id="Q9NV06-1"/>
    <property type="protein sequence ID" value="ENSP00000484962.1"/>
    <property type="gene ID" value="ENSG00000164934.15"/>
</dbReference>
<dbReference type="GeneID" id="25879"/>
<dbReference type="KEGG" id="hsa:25879"/>
<dbReference type="MANE-Select" id="ENST00000612750.5">
    <property type="protein sequence ID" value="ENSP00000484962.1"/>
    <property type="RefSeq nucleotide sequence ID" value="NM_015420.7"/>
    <property type="RefSeq protein sequence ID" value="NP_056235.5"/>
</dbReference>
<dbReference type="UCSC" id="uc064pix.1">
    <molecule id="Q9NV06-1"/>
    <property type="organism name" value="human"/>
</dbReference>
<dbReference type="AGR" id="HGNC:24535"/>
<dbReference type="CTD" id="25879"/>
<dbReference type="DisGeNET" id="25879"/>
<dbReference type="GeneCards" id="DCAF13"/>
<dbReference type="HGNC" id="HGNC:24535">
    <property type="gene designation" value="DCAF13"/>
</dbReference>
<dbReference type="HPA" id="ENSG00000164934">
    <property type="expression patterns" value="Low tissue specificity"/>
</dbReference>
<dbReference type="MIM" id="616196">
    <property type="type" value="gene"/>
</dbReference>
<dbReference type="neXtProt" id="NX_Q9NV06"/>
<dbReference type="OpenTargets" id="ENSG00000164934"/>
<dbReference type="PharmGKB" id="PA165585440"/>
<dbReference type="VEuPathDB" id="HostDB:ENSG00000164934"/>
<dbReference type="eggNOG" id="KOG0268">
    <property type="taxonomic scope" value="Eukaryota"/>
</dbReference>
<dbReference type="GeneTree" id="ENSGT00390000005711"/>
<dbReference type="HOGENOM" id="CLU_033999_0_0_1"/>
<dbReference type="InParanoid" id="Q9NV06"/>
<dbReference type="OrthoDB" id="10249065at2759"/>
<dbReference type="PAN-GO" id="Q9NV06">
    <property type="GO annotations" value="3 GO annotations based on evolutionary models"/>
</dbReference>
<dbReference type="PhylomeDB" id="Q9NV06"/>
<dbReference type="TreeFam" id="TF300844"/>
<dbReference type="PathwayCommons" id="Q9NV06"/>
<dbReference type="Reactome" id="R-HSA-6790901">
    <property type="pathway name" value="rRNA modification in the nucleus and cytosol"/>
</dbReference>
<dbReference type="Reactome" id="R-HSA-6791226">
    <property type="pathway name" value="Major pathway of rRNA processing in the nucleolus and cytosol"/>
</dbReference>
<dbReference type="Reactome" id="R-HSA-8951664">
    <property type="pathway name" value="Neddylation"/>
</dbReference>
<dbReference type="SignaLink" id="Q9NV06"/>
<dbReference type="UniPathway" id="UPA00143"/>
<dbReference type="BioGRID-ORCS" id="25879">
    <property type="hits" value="91 hits in 1199 CRISPR screens"/>
</dbReference>
<dbReference type="CD-CODE" id="91857CE7">
    <property type="entry name" value="Nucleolus"/>
</dbReference>
<dbReference type="ChiTaRS" id="DCAF13">
    <property type="organism name" value="human"/>
</dbReference>
<dbReference type="GenomeRNAi" id="25879"/>
<dbReference type="Pharos" id="Q9NV06">
    <property type="development level" value="Tbio"/>
</dbReference>
<dbReference type="PRO" id="PR:Q9NV06"/>
<dbReference type="Proteomes" id="UP000005640">
    <property type="component" value="Chromosome 8"/>
</dbReference>
<dbReference type="RNAct" id="Q9NV06">
    <property type="molecule type" value="protein"/>
</dbReference>
<dbReference type="Bgee" id="ENSG00000164934">
    <property type="expression patterns" value="Expressed in secondary oocyte and 184 other cell types or tissues"/>
</dbReference>
<dbReference type="ExpressionAtlas" id="Q9NV06">
    <property type="expression patterns" value="baseline and differential"/>
</dbReference>
<dbReference type="GO" id="GO:0030054">
    <property type="term" value="C:cell junction"/>
    <property type="evidence" value="ECO:0000314"/>
    <property type="project" value="HPA"/>
</dbReference>
<dbReference type="GO" id="GO:0005813">
    <property type="term" value="C:centrosome"/>
    <property type="evidence" value="ECO:0000314"/>
    <property type="project" value="HPA"/>
</dbReference>
<dbReference type="GO" id="GO:0080008">
    <property type="term" value="C:Cul4-RING E3 ubiquitin ligase complex"/>
    <property type="evidence" value="ECO:0000314"/>
    <property type="project" value="UniProtKB"/>
</dbReference>
<dbReference type="GO" id="GO:0005829">
    <property type="term" value="C:cytosol"/>
    <property type="evidence" value="ECO:0000314"/>
    <property type="project" value="HPA"/>
</dbReference>
<dbReference type="GO" id="GO:0005730">
    <property type="term" value="C:nucleolus"/>
    <property type="evidence" value="ECO:0000314"/>
    <property type="project" value="HPA"/>
</dbReference>
<dbReference type="GO" id="GO:0005654">
    <property type="term" value="C:nucleoplasm"/>
    <property type="evidence" value="ECO:0000314"/>
    <property type="project" value="HPA"/>
</dbReference>
<dbReference type="GO" id="GO:0032040">
    <property type="term" value="C:small-subunit processome"/>
    <property type="evidence" value="ECO:0000318"/>
    <property type="project" value="GO_Central"/>
</dbReference>
<dbReference type="GO" id="GO:0030331">
    <property type="term" value="F:nuclear estrogen receptor binding"/>
    <property type="evidence" value="ECO:0000353"/>
    <property type="project" value="UniProtKB"/>
</dbReference>
<dbReference type="GO" id="GO:0003723">
    <property type="term" value="F:RNA binding"/>
    <property type="evidence" value="ECO:0007005"/>
    <property type="project" value="UniProtKB"/>
</dbReference>
<dbReference type="GO" id="GO:1990756">
    <property type="term" value="F:ubiquitin-like ligase-substrate adaptor activity"/>
    <property type="evidence" value="ECO:0000314"/>
    <property type="project" value="UniProtKB"/>
</dbReference>
<dbReference type="GO" id="GO:0046697">
    <property type="term" value="P:decidualization"/>
    <property type="evidence" value="ECO:0000314"/>
    <property type="project" value="UniProtKB"/>
</dbReference>
<dbReference type="GO" id="GO:0044725">
    <property type="term" value="P:epigenetic programming in the zygotic pronuclei"/>
    <property type="evidence" value="ECO:0000314"/>
    <property type="project" value="UniProt"/>
</dbReference>
<dbReference type="GO" id="GO:0000462">
    <property type="term" value="P:maturation of SSU-rRNA from tricistronic rRNA transcript (SSU-rRNA, 5.8S rRNA, LSU-rRNA)"/>
    <property type="evidence" value="ECO:0000318"/>
    <property type="project" value="GO_Central"/>
</dbReference>
<dbReference type="GO" id="GO:0001555">
    <property type="term" value="P:oocyte growth"/>
    <property type="evidence" value="ECO:0000250"/>
    <property type="project" value="UniProtKB"/>
</dbReference>
<dbReference type="GO" id="GO:0043161">
    <property type="term" value="P:proteasome-mediated ubiquitin-dependent protein catabolic process"/>
    <property type="evidence" value="ECO:0000314"/>
    <property type="project" value="UniProt"/>
</dbReference>
<dbReference type="GO" id="GO:0016567">
    <property type="term" value="P:protein ubiquitination"/>
    <property type="evidence" value="ECO:0007669"/>
    <property type="project" value="UniProtKB-UniPathway"/>
</dbReference>
<dbReference type="GO" id="GO:0006364">
    <property type="term" value="P:rRNA processing"/>
    <property type="evidence" value="ECO:0000250"/>
    <property type="project" value="UniProtKB"/>
</dbReference>
<dbReference type="GO" id="GO:0007056">
    <property type="term" value="P:spindle assembly involved in female meiosis"/>
    <property type="evidence" value="ECO:0000314"/>
    <property type="project" value="UniProt"/>
</dbReference>
<dbReference type="CDD" id="cd00200">
    <property type="entry name" value="WD40"/>
    <property type="match status" value="1"/>
</dbReference>
<dbReference type="FunFam" id="2.130.10.10:FF:000132">
    <property type="entry name" value="DDB1- and CUL4-associated factor 13"/>
    <property type="match status" value="1"/>
</dbReference>
<dbReference type="FunFam" id="2.130.10.10:FF:000269">
    <property type="entry name" value="DDB1- and CUL4-associated factor 13"/>
    <property type="match status" value="1"/>
</dbReference>
<dbReference type="Gene3D" id="2.130.10.10">
    <property type="entry name" value="YVTN repeat-like/Quinoprotein amine dehydrogenase"/>
    <property type="match status" value="2"/>
</dbReference>
<dbReference type="InterPro" id="IPR007287">
    <property type="entry name" value="Sof1"/>
</dbReference>
<dbReference type="InterPro" id="IPR015943">
    <property type="entry name" value="WD40/YVTN_repeat-like_dom_sf"/>
</dbReference>
<dbReference type="InterPro" id="IPR019775">
    <property type="entry name" value="WD40_repeat_CS"/>
</dbReference>
<dbReference type="InterPro" id="IPR036322">
    <property type="entry name" value="WD40_repeat_dom_sf"/>
</dbReference>
<dbReference type="InterPro" id="IPR001680">
    <property type="entry name" value="WD40_rpt"/>
</dbReference>
<dbReference type="InterPro" id="IPR051733">
    <property type="entry name" value="WD_repeat_DCAF13/WDSOF1"/>
</dbReference>
<dbReference type="PANTHER" id="PTHR22851:SF0">
    <property type="entry name" value="DDB1- AND CUL4-ASSOCIATED FACTOR 13"/>
    <property type="match status" value="1"/>
</dbReference>
<dbReference type="PANTHER" id="PTHR22851">
    <property type="entry name" value="U3 SMALL NUCLEOLAR RNA U3 SNORNA ASSOCIATED PROTEIN"/>
    <property type="match status" value="1"/>
</dbReference>
<dbReference type="Pfam" id="PF04158">
    <property type="entry name" value="Sof1"/>
    <property type="match status" value="1"/>
</dbReference>
<dbReference type="Pfam" id="PF00400">
    <property type="entry name" value="WD40"/>
    <property type="match status" value="5"/>
</dbReference>
<dbReference type="SMART" id="SM00320">
    <property type="entry name" value="WD40"/>
    <property type="match status" value="5"/>
</dbReference>
<dbReference type="SUPFAM" id="SSF50978">
    <property type="entry name" value="WD40 repeat-like"/>
    <property type="match status" value="1"/>
</dbReference>
<dbReference type="PROSITE" id="PS00678">
    <property type="entry name" value="WD_REPEATS_1"/>
    <property type="match status" value="1"/>
</dbReference>
<dbReference type="PROSITE" id="PS50082">
    <property type="entry name" value="WD_REPEATS_2"/>
    <property type="match status" value="3"/>
</dbReference>
<dbReference type="PROSITE" id="PS50294">
    <property type="entry name" value="WD_REPEATS_REGION"/>
    <property type="match status" value="1"/>
</dbReference>
<evidence type="ECO:0000250" key="1">
    <source>
        <dbReference type="UniProtKB" id="Q6PAC3"/>
    </source>
</evidence>
<evidence type="ECO:0000269" key="2">
    <source>
    </source>
</evidence>
<evidence type="ECO:0000269" key="3">
    <source>
    </source>
</evidence>
<evidence type="ECO:0000269" key="4">
    <source>
    </source>
</evidence>
<evidence type="ECO:0000269" key="5">
    <source>
    </source>
</evidence>
<evidence type="ECO:0000269" key="6">
    <source>
    </source>
</evidence>
<evidence type="ECO:0000269" key="7">
    <source>
    </source>
</evidence>
<evidence type="ECO:0000269" key="8">
    <source>
    </source>
</evidence>
<evidence type="ECO:0000269" key="9">
    <source>
    </source>
</evidence>
<evidence type="ECO:0000269" key="10">
    <source>
    </source>
</evidence>
<evidence type="ECO:0000269" key="11">
    <source>
    </source>
</evidence>
<evidence type="ECO:0000303" key="12">
    <source>
    </source>
</evidence>
<evidence type="ECO:0000305" key="13"/>
<evidence type="ECO:0000312" key="14">
    <source>
        <dbReference type="HGNC" id="HGNC:24535"/>
    </source>
</evidence>
<evidence type="ECO:0007744" key="15">
    <source>
        <dbReference type="PDB" id="7MQ8"/>
    </source>
</evidence>
<evidence type="ECO:0007744" key="16">
    <source>
        <dbReference type="PDB" id="7MQ9"/>
    </source>
</evidence>
<evidence type="ECO:0007744" key="17">
    <source>
        <dbReference type="PDB" id="7MQA"/>
    </source>
</evidence>
<evidence type="ECO:0007744" key="18">
    <source>
    </source>
</evidence>
<protein>
    <recommendedName>
        <fullName>DDB1- and CUL4-associated factor 13</fullName>
    </recommendedName>
    <alternativeName>
        <fullName>WD repeat and SOF domain-containing protein 1</fullName>
    </alternativeName>
</protein>
<name>DCA13_HUMAN</name>
<accession>Q9NV06</accession>
<accession>Q3MII9</accession>
<accession>Q8NCH8</accession>
<accession>Q8TC51</accession>
<accession>Q96JY7</accession>
<accession>Q9NZX3</accession>
<organism>
    <name type="scientific">Homo sapiens</name>
    <name type="common">Human</name>
    <dbReference type="NCBI Taxonomy" id="9606"/>
    <lineage>
        <taxon>Eukaryota</taxon>
        <taxon>Metazoa</taxon>
        <taxon>Chordata</taxon>
        <taxon>Craniata</taxon>
        <taxon>Vertebrata</taxon>
        <taxon>Euteleostomi</taxon>
        <taxon>Mammalia</taxon>
        <taxon>Eutheria</taxon>
        <taxon>Euarchontoglires</taxon>
        <taxon>Primates</taxon>
        <taxon>Haplorrhini</taxon>
        <taxon>Catarrhini</taxon>
        <taxon>Hominidae</taxon>
        <taxon>Homo</taxon>
    </lineage>
</organism>